<reference key="1">
    <citation type="journal article" date="2006" name="Nat. Biotechnol.">
        <title>Complete genome sequence of the entomopathogenic and metabolically versatile soil bacterium Pseudomonas entomophila.</title>
        <authorList>
            <person name="Vodovar N."/>
            <person name="Vallenet D."/>
            <person name="Cruveiller S."/>
            <person name="Rouy Z."/>
            <person name="Barbe V."/>
            <person name="Acosta C."/>
            <person name="Cattolico L."/>
            <person name="Jubin C."/>
            <person name="Lajus A."/>
            <person name="Segurens B."/>
            <person name="Vacherie B."/>
            <person name="Wincker P."/>
            <person name="Weissenbach J."/>
            <person name="Lemaitre B."/>
            <person name="Medigue C."/>
            <person name="Boccard F."/>
        </authorList>
    </citation>
    <scope>NUCLEOTIDE SEQUENCE [LARGE SCALE GENOMIC DNA]</scope>
    <source>
        <strain>L48</strain>
    </source>
</reference>
<feature type="chain" id="PRO_1000049409" description="Lipid-A-disaccharide synthase">
    <location>
        <begin position="1"/>
        <end position="375"/>
    </location>
</feature>
<protein>
    <recommendedName>
        <fullName evidence="1">Lipid-A-disaccharide synthase</fullName>
        <ecNumber evidence="1">2.4.1.182</ecNumber>
    </recommendedName>
</protein>
<comment type="function">
    <text evidence="1">Condensation of UDP-2,3-diacylglucosamine and 2,3-diacylglucosamine-1-phosphate to form lipid A disaccharide, a precursor of lipid A, a phosphorylated glycolipid that anchors the lipopolysaccharide to the outer membrane of the cell.</text>
</comment>
<comment type="catalytic activity">
    <reaction evidence="1">
        <text>a lipid X + a UDP-2-N,3-O-bis[(3R)-3-hydroxyacyl]-alpha-D-glucosamine = a lipid A disaccharide + UDP + H(+)</text>
        <dbReference type="Rhea" id="RHEA:67828"/>
        <dbReference type="ChEBI" id="CHEBI:15378"/>
        <dbReference type="ChEBI" id="CHEBI:58223"/>
        <dbReference type="ChEBI" id="CHEBI:137748"/>
        <dbReference type="ChEBI" id="CHEBI:176338"/>
        <dbReference type="ChEBI" id="CHEBI:176343"/>
        <dbReference type="EC" id="2.4.1.182"/>
    </reaction>
</comment>
<comment type="pathway">
    <text evidence="1">Bacterial outer membrane biogenesis; LPS lipid A biosynthesis.</text>
</comment>
<comment type="similarity">
    <text evidence="1">Belongs to the LpxB family.</text>
</comment>
<proteinExistence type="inferred from homology"/>
<gene>
    <name evidence="1" type="primary">lpxB</name>
    <name type="ordered locus">PSEEN4207</name>
</gene>
<accession>Q1I639</accession>
<name>LPXB_PSEE4</name>
<keyword id="KW-0328">Glycosyltransferase</keyword>
<keyword id="KW-0441">Lipid A biosynthesis</keyword>
<keyword id="KW-0444">Lipid biosynthesis</keyword>
<keyword id="KW-0443">Lipid metabolism</keyword>
<keyword id="KW-0808">Transferase</keyword>
<dbReference type="EC" id="2.4.1.182" evidence="1"/>
<dbReference type="EMBL" id="CT573326">
    <property type="protein sequence ID" value="CAK16896.1"/>
    <property type="molecule type" value="Genomic_DNA"/>
</dbReference>
<dbReference type="RefSeq" id="WP_011535267.1">
    <property type="nucleotide sequence ID" value="NC_008027.1"/>
</dbReference>
<dbReference type="SMR" id="Q1I639"/>
<dbReference type="STRING" id="384676.PSEEN4207"/>
<dbReference type="CAZy" id="GT19">
    <property type="family name" value="Glycosyltransferase Family 19"/>
</dbReference>
<dbReference type="GeneID" id="32807214"/>
<dbReference type="KEGG" id="pen:PSEEN4207"/>
<dbReference type="eggNOG" id="COG0763">
    <property type="taxonomic scope" value="Bacteria"/>
</dbReference>
<dbReference type="HOGENOM" id="CLU_036577_3_0_6"/>
<dbReference type="OrthoDB" id="9801642at2"/>
<dbReference type="UniPathway" id="UPA00973"/>
<dbReference type="Proteomes" id="UP000000658">
    <property type="component" value="Chromosome"/>
</dbReference>
<dbReference type="GO" id="GO:0016020">
    <property type="term" value="C:membrane"/>
    <property type="evidence" value="ECO:0007669"/>
    <property type="project" value="GOC"/>
</dbReference>
<dbReference type="GO" id="GO:0008915">
    <property type="term" value="F:lipid-A-disaccharide synthase activity"/>
    <property type="evidence" value="ECO:0007669"/>
    <property type="project" value="UniProtKB-UniRule"/>
</dbReference>
<dbReference type="GO" id="GO:0005543">
    <property type="term" value="F:phospholipid binding"/>
    <property type="evidence" value="ECO:0007669"/>
    <property type="project" value="TreeGrafter"/>
</dbReference>
<dbReference type="GO" id="GO:0009245">
    <property type="term" value="P:lipid A biosynthetic process"/>
    <property type="evidence" value="ECO:0007669"/>
    <property type="project" value="UniProtKB-UniRule"/>
</dbReference>
<dbReference type="Gene3D" id="3.40.50.2000">
    <property type="entry name" value="Glycogen Phosphorylase B"/>
    <property type="match status" value="1"/>
</dbReference>
<dbReference type="HAMAP" id="MF_00392">
    <property type="entry name" value="LpxB"/>
    <property type="match status" value="1"/>
</dbReference>
<dbReference type="InterPro" id="IPR003835">
    <property type="entry name" value="Glyco_trans_19"/>
</dbReference>
<dbReference type="NCBIfam" id="TIGR00215">
    <property type="entry name" value="lpxB"/>
    <property type="match status" value="1"/>
</dbReference>
<dbReference type="PANTHER" id="PTHR30372">
    <property type="entry name" value="LIPID-A-DISACCHARIDE SYNTHASE"/>
    <property type="match status" value="1"/>
</dbReference>
<dbReference type="PANTHER" id="PTHR30372:SF4">
    <property type="entry name" value="LIPID-A-DISACCHARIDE SYNTHASE, MITOCHONDRIAL-RELATED"/>
    <property type="match status" value="1"/>
</dbReference>
<dbReference type="Pfam" id="PF02684">
    <property type="entry name" value="LpxB"/>
    <property type="match status" value="1"/>
</dbReference>
<dbReference type="SUPFAM" id="SSF53756">
    <property type="entry name" value="UDP-Glycosyltransferase/glycogen phosphorylase"/>
    <property type="match status" value="1"/>
</dbReference>
<sequence>MAQLCVALVAGEASGDILGSGLMRAIKARHPDVRFIGVGGPLMEAEGMSSYFPMERLAVMGLVEVLGRLRELLKRRKELIATLIDEKPDVFIGIDAPDFTLNIELKLRQAGIKTVHYVSPSVWAWRQKRVLKIREGCDLMLTLLPFEARFYEEQGVPVRFVGHPLADTIPLESDRGAARAELGLAEGPVIALMPGSRGGEVGRLGALFLDAAQRLRELVPGVRFVLPCANAARRAQVEQMLEGRDLPLTLLDGRSHQALAACDAVLIASGTATLEAMLYKRPMVVAYRLAPLTYWILKRMVKSPYVSLPNLLAQRMLVPELLQDAATSEALAQTLAPLVGDGSQQTDSFDQIHRTLRRDASNQAADAVLALLKDR</sequence>
<evidence type="ECO:0000255" key="1">
    <source>
        <dbReference type="HAMAP-Rule" id="MF_00392"/>
    </source>
</evidence>
<organism>
    <name type="scientific">Pseudomonas entomophila (strain L48)</name>
    <dbReference type="NCBI Taxonomy" id="384676"/>
    <lineage>
        <taxon>Bacteria</taxon>
        <taxon>Pseudomonadati</taxon>
        <taxon>Pseudomonadota</taxon>
        <taxon>Gammaproteobacteria</taxon>
        <taxon>Pseudomonadales</taxon>
        <taxon>Pseudomonadaceae</taxon>
        <taxon>Pseudomonas</taxon>
    </lineage>
</organism>